<proteinExistence type="evidence at protein level"/>
<reference key="1">
    <citation type="journal article" date="1999" name="Nature">
        <title>Sequence and analysis of chromosome 2 of the plant Arabidopsis thaliana.</title>
        <authorList>
            <person name="Lin X."/>
            <person name="Kaul S."/>
            <person name="Rounsley S.D."/>
            <person name="Shea T.P."/>
            <person name="Benito M.-I."/>
            <person name="Town C.D."/>
            <person name="Fujii C.Y."/>
            <person name="Mason T.M."/>
            <person name="Bowman C.L."/>
            <person name="Barnstead M.E."/>
            <person name="Feldblyum T.V."/>
            <person name="Buell C.R."/>
            <person name="Ketchum K.A."/>
            <person name="Lee J.J."/>
            <person name="Ronning C.M."/>
            <person name="Koo H.L."/>
            <person name="Moffat K.S."/>
            <person name="Cronin L.A."/>
            <person name="Shen M."/>
            <person name="Pai G."/>
            <person name="Van Aken S."/>
            <person name="Umayam L."/>
            <person name="Tallon L.J."/>
            <person name="Gill J.E."/>
            <person name="Adams M.D."/>
            <person name="Carrera A.J."/>
            <person name="Creasy T.H."/>
            <person name="Goodman H.M."/>
            <person name="Somerville C.R."/>
            <person name="Copenhaver G.P."/>
            <person name="Preuss D."/>
            <person name="Nierman W.C."/>
            <person name="White O."/>
            <person name="Eisen J.A."/>
            <person name="Salzberg S.L."/>
            <person name="Fraser C.M."/>
            <person name="Venter J.C."/>
        </authorList>
    </citation>
    <scope>NUCLEOTIDE SEQUENCE [LARGE SCALE GENOMIC DNA]</scope>
    <source>
        <strain>cv. Columbia</strain>
    </source>
</reference>
<reference key="2">
    <citation type="journal article" date="2017" name="Plant J.">
        <title>Araport11: a complete reannotation of the Arabidopsis thaliana reference genome.</title>
        <authorList>
            <person name="Cheng C.Y."/>
            <person name="Krishnakumar V."/>
            <person name="Chan A.P."/>
            <person name="Thibaud-Nissen F."/>
            <person name="Schobel S."/>
            <person name="Town C.D."/>
        </authorList>
    </citation>
    <scope>GENOME REANNOTATION</scope>
    <source>
        <strain>cv. Columbia</strain>
    </source>
</reference>
<reference key="3">
    <citation type="journal article" date="2002" name="Science">
        <title>Functional annotation of a full-length Arabidopsis cDNA collection.</title>
        <authorList>
            <person name="Seki M."/>
            <person name="Narusaka M."/>
            <person name="Kamiya A."/>
            <person name="Ishida J."/>
            <person name="Satou M."/>
            <person name="Sakurai T."/>
            <person name="Nakajima M."/>
            <person name="Enju A."/>
            <person name="Akiyama K."/>
            <person name="Oono Y."/>
            <person name="Muramatsu M."/>
            <person name="Hayashizaki Y."/>
            <person name="Kawai J."/>
            <person name="Carninci P."/>
            <person name="Itoh M."/>
            <person name="Ishii Y."/>
            <person name="Arakawa T."/>
            <person name="Shibata K."/>
            <person name="Shinagawa A."/>
            <person name="Shinozaki K."/>
        </authorList>
    </citation>
    <scope>NUCLEOTIDE SEQUENCE [LARGE SCALE MRNA]</scope>
    <source>
        <strain>cv. Columbia</strain>
    </source>
</reference>
<reference key="4">
    <citation type="journal article" date="2003" name="Science">
        <title>Empirical analysis of transcriptional activity in the Arabidopsis genome.</title>
        <authorList>
            <person name="Yamada K."/>
            <person name="Lim J."/>
            <person name="Dale J.M."/>
            <person name="Chen H."/>
            <person name="Shinn P."/>
            <person name="Palm C.J."/>
            <person name="Southwick A.M."/>
            <person name="Wu H.C."/>
            <person name="Kim C.J."/>
            <person name="Nguyen M."/>
            <person name="Pham P.K."/>
            <person name="Cheuk R.F."/>
            <person name="Karlin-Newmann G."/>
            <person name="Liu S.X."/>
            <person name="Lam B."/>
            <person name="Sakano H."/>
            <person name="Wu T."/>
            <person name="Yu G."/>
            <person name="Miranda M."/>
            <person name="Quach H.L."/>
            <person name="Tripp M."/>
            <person name="Chang C.H."/>
            <person name="Lee J.M."/>
            <person name="Toriumi M.J."/>
            <person name="Chan M.M."/>
            <person name="Tang C.C."/>
            <person name="Onodera C.S."/>
            <person name="Deng J.M."/>
            <person name="Akiyama K."/>
            <person name="Ansari Y."/>
            <person name="Arakawa T."/>
            <person name="Banh J."/>
            <person name="Banno F."/>
            <person name="Bowser L."/>
            <person name="Brooks S.Y."/>
            <person name="Carninci P."/>
            <person name="Chao Q."/>
            <person name="Choy N."/>
            <person name="Enju A."/>
            <person name="Goldsmith A.D."/>
            <person name="Gurjal M."/>
            <person name="Hansen N.F."/>
            <person name="Hayashizaki Y."/>
            <person name="Johnson-Hopson C."/>
            <person name="Hsuan V.W."/>
            <person name="Iida K."/>
            <person name="Karnes M."/>
            <person name="Khan S."/>
            <person name="Koesema E."/>
            <person name="Ishida J."/>
            <person name="Jiang P.X."/>
            <person name="Jones T."/>
            <person name="Kawai J."/>
            <person name="Kamiya A."/>
            <person name="Meyers C."/>
            <person name="Nakajima M."/>
            <person name="Narusaka M."/>
            <person name="Seki M."/>
            <person name="Sakurai T."/>
            <person name="Satou M."/>
            <person name="Tamse R."/>
            <person name="Vaysberg M."/>
            <person name="Wallender E.K."/>
            <person name="Wong C."/>
            <person name="Yamamura Y."/>
            <person name="Yuan S."/>
            <person name="Shinozaki K."/>
            <person name="Davis R.W."/>
            <person name="Theologis A."/>
            <person name="Ecker J.R."/>
        </authorList>
    </citation>
    <scope>NUCLEOTIDE SEQUENCE [LARGE SCALE MRNA]</scope>
    <source>
        <strain>cv. Columbia</strain>
    </source>
</reference>
<reference key="5">
    <citation type="journal article" date="2005" name="FEBS J.">
        <title>Two types of replication protein A in seed plants.</title>
        <authorList>
            <person name="Ishibashi T."/>
            <person name="Koga A."/>
            <person name="Yamamoto T."/>
            <person name="Uchiyama Y."/>
            <person name="Mori Y."/>
            <person name="Hashimoto J."/>
            <person name="Kimura S."/>
            <person name="Sakaguchi K."/>
        </authorList>
    </citation>
    <scope>DISRUPTION PHENOTYPE</scope>
</reference>
<reference key="6">
    <citation type="journal article" date="2009" name="EMBO J.">
        <title>Replication protein A (AtRPA1a) is required for class I crossover formation but is dispensable for meiotic DNA break repair.</title>
        <authorList>
            <person name="Osman K."/>
            <person name="Sanchez-Moran E."/>
            <person name="Mann S.C."/>
            <person name="Jones G.H."/>
            <person name="Franklin F.C."/>
        </authorList>
    </citation>
    <scope>FUNCTION</scope>
    <scope>SUBCELLULAR LOCATION</scope>
    <scope>DISRUPTION PHENOTYPE</scope>
</reference>
<reference key="7">
    <citation type="journal article" date="2009" name="Plant Cell Physiol.">
        <title>Arabidopsis replication protein A 70a is required for DNA damage response and telomere length homeostasis.</title>
        <authorList>
            <person name="Takashi Y."/>
            <person name="Kobayashi Y."/>
            <person name="Tanaka K."/>
            <person name="Tamura K."/>
        </authorList>
    </citation>
    <scope>FUNCTION</scope>
    <scope>INTERACTION WITH RPA2A</scope>
    <scope>TISSUE SPECIFICITY</scope>
    <scope>INDUCTION</scope>
</reference>
<name>RFA1A_ARATH</name>
<evidence type="ECO:0000250" key="1"/>
<evidence type="ECO:0000255" key="2"/>
<evidence type="ECO:0000269" key="3">
    <source>
    </source>
</evidence>
<evidence type="ECO:0000269" key="4">
    <source>
    </source>
</evidence>
<evidence type="ECO:0000269" key="5">
    <source>
    </source>
</evidence>
<evidence type="ECO:0000305" key="6"/>
<keyword id="KW-0025">Alternative splicing</keyword>
<keyword id="KW-0227">DNA damage</keyword>
<keyword id="KW-0233">DNA recombination</keyword>
<keyword id="KW-0234">DNA repair</keyword>
<keyword id="KW-0235">DNA replication</keyword>
<keyword id="KW-0238">DNA-binding</keyword>
<keyword id="KW-0479">Metal-binding</keyword>
<keyword id="KW-0539">Nucleus</keyword>
<keyword id="KW-1185">Reference proteome</keyword>
<keyword id="KW-0862">Zinc</keyword>
<keyword id="KW-0863">Zinc-finger</keyword>
<accession>Q9SKI4</accession>
<organism>
    <name type="scientific">Arabidopsis thaliana</name>
    <name type="common">Mouse-ear cress</name>
    <dbReference type="NCBI Taxonomy" id="3702"/>
    <lineage>
        <taxon>Eukaryota</taxon>
        <taxon>Viridiplantae</taxon>
        <taxon>Streptophyta</taxon>
        <taxon>Embryophyta</taxon>
        <taxon>Tracheophyta</taxon>
        <taxon>Spermatophyta</taxon>
        <taxon>Magnoliopsida</taxon>
        <taxon>eudicotyledons</taxon>
        <taxon>Gunneridae</taxon>
        <taxon>Pentapetalae</taxon>
        <taxon>rosids</taxon>
        <taxon>malvids</taxon>
        <taxon>Brassicales</taxon>
        <taxon>Brassicaceae</taxon>
        <taxon>Camelineae</taxon>
        <taxon>Arabidopsis</taxon>
    </lineage>
</organism>
<dbReference type="EMBL" id="AC006420">
    <property type="protein sequence ID" value="AAD25150.1"/>
    <property type="molecule type" value="Genomic_DNA"/>
</dbReference>
<dbReference type="EMBL" id="CP002685">
    <property type="protein sequence ID" value="AEC06010.1"/>
    <property type="molecule type" value="Genomic_DNA"/>
</dbReference>
<dbReference type="EMBL" id="AK118699">
    <property type="protein sequence ID" value="BAC43293.1"/>
    <property type="molecule type" value="mRNA"/>
</dbReference>
<dbReference type="EMBL" id="BT005946">
    <property type="protein sequence ID" value="AAO64881.1"/>
    <property type="molecule type" value="mRNA"/>
</dbReference>
<dbReference type="PIR" id="B84478">
    <property type="entry name" value="B84478"/>
</dbReference>
<dbReference type="RefSeq" id="NP_178690.1">
    <molecule id="Q9SKI4-1"/>
    <property type="nucleotide sequence ID" value="NM_126648.4"/>
</dbReference>
<dbReference type="SMR" id="Q9SKI4"/>
<dbReference type="BioGRID" id="604">
    <property type="interactions" value="2"/>
</dbReference>
<dbReference type="FunCoup" id="Q9SKI4">
    <property type="interactions" value="4253"/>
</dbReference>
<dbReference type="IntAct" id="Q9SKI4">
    <property type="interactions" value="1"/>
</dbReference>
<dbReference type="STRING" id="3702.Q9SKI4"/>
<dbReference type="iPTMnet" id="Q9SKI4"/>
<dbReference type="PaxDb" id="3702-AT2G06510.1"/>
<dbReference type="ProteomicsDB" id="236894">
    <molecule id="Q9SKI4-1"/>
</dbReference>
<dbReference type="EnsemblPlants" id="AT2G06510.1">
    <molecule id="Q9SKI4-1"/>
    <property type="protein sequence ID" value="AT2G06510.1"/>
    <property type="gene ID" value="AT2G06510"/>
</dbReference>
<dbReference type="GeneID" id="815209"/>
<dbReference type="Gramene" id="AT2G06510.1">
    <molecule id="Q9SKI4-1"/>
    <property type="protein sequence ID" value="AT2G06510.1"/>
    <property type="gene ID" value="AT2G06510"/>
</dbReference>
<dbReference type="KEGG" id="ath:AT2G06510"/>
<dbReference type="Araport" id="AT2G06510"/>
<dbReference type="TAIR" id="AT2G06510">
    <property type="gene designation" value="RPA1A"/>
</dbReference>
<dbReference type="eggNOG" id="KOG0851">
    <property type="taxonomic scope" value="Eukaryota"/>
</dbReference>
<dbReference type="InParanoid" id="Q9SKI4"/>
<dbReference type="OrthoDB" id="1751331at2759"/>
<dbReference type="PhylomeDB" id="Q9SKI4"/>
<dbReference type="CD-CODE" id="4299E36E">
    <property type="entry name" value="Nucleolus"/>
</dbReference>
<dbReference type="PRO" id="PR:Q9SKI4"/>
<dbReference type="Proteomes" id="UP000006548">
    <property type="component" value="Chromosome 2"/>
</dbReference>
<dbReference type="ExpressionAtlas" id="Q9SKI4">
    <property type="expression patterns" value="baseline and differential"/>
</dbReference>
<dbReference type="GO" id="GO:0000785">
    <property type="term" value="C:chromatin"/>
    <property type="evidence" value="ECO:0000314"/>
    <property type="project" value="TAIR"/>
</dbReference>
<dbReference type="GO" id="GO:0005634">
    <property type="term" value="C:nucleus"/>
    <property type="evidence" value="ECO:0007669"/>
    <property type="project" value="UniProtKB-SubCell"/>
</dbReference>
<dbReference type="GO" id="GO:0003677">
    <property type="term" value="F:DNA binding"/>
    <property type="evidence" value="ECO:0007669"/>
    <property type="project" value="UniProtKB-KW"/>
</dbReference>
<dbReference type="GO" id="GO:0008270">
    <property type="term" value="F:zinc ion binding"/>
    <property type="evidence" value="ECO:0007669"/>
    <property type="project" value="UniProtKB-KW"/>
</dbReference>
<dbReference type="GO" id="GO:0051026">
    <property type="term" value="P:chiasma assembly"/>
    <property type="evidence" value="ECO:0000315"/>
    <property type="project" value="TAIR"/>
</dbReference>
<dbReference type="GO" id="GO:0006281">
    <property type="term" value="P:DNA repair"/>
    <property type="evidence" value="ECO:0007669"/>
    <property type="project" value="UniProtKB-KW"/>
</dbReference>
<dbReference type="GO" id="GO:0006260">
    <property type="term" value="P:DNA replication"/>
    <property type="evidence" value="ECO:0007669"/>
    <property type="project" value="UniProtKB-KW"/>
</dbReference>
<dbReference type="GO" id="GO:0048232">
    <property type="term" value="P:male gamete generation"/>
    <property type="evidence" value="ECO:0000315"/>
    <property type="project" value="TAIR"/>
</dbReference>
<dbReference type="GO" id="GO:0007141">
    <property type="term" value="P:male meiosis I"/>
    <property type="evidence" value="ECO:0000315"/>
    <property type="project" value="TAIR"/>
</dbReference>
<dbReference type="GO" id="GO:0009555">
    <property type="term" value="P:pollen development"/>
    <property type="evidence" value="ECO:0000315"/>
    <property type="project" value="TAIR"/>
</dbReference>
<dbReference type="GO" id="GO:0007131">
    <property type="term" value="P:reciprocal meiotic recombination"/>
    <property type="evidence" value="ECO:0000316"/>
    <property type="project" value="TAIR"/>
</dbReference>
<dbReference type="CDD" id="cd04474">
    <property type="entry name" value="RPA1_DBD_A"/>
    <property type="match status" value="1"/>
</dbReference>
<dbReference type="CDD" id="cd04475">
    <property type="entry name" value="RPA1_DBD_B"/>
    <property type="match status" value="1"/>
</dbReference>
<dbReference type="CDD" id="cd04476">
    <property type="entry name" value="RPA1_DBD_C"/>
    <property type="match status" value="1"/>
</dbReference>
<dbReference type="CDD" id="cd04477">
    <property type="entry name" value="RPA1N"/>
    <property type="match status" value="1"/>
</dbReference>
<dbReference type="DisProt" id="DP01085"/>
<dbReference type="FunFam" id="2.40.50.140:FF:000041">
    <property type="entry name" value="Replication protein A subunit"/>
    <property type="match status" value="1"/>
</dbReference>
<dbReference type="FunFam" id="2.40.50.140:FF:000064">
    <property type="entry name" value="Replication protein A subunit"/>
    <property type="match status" value="1"/>
</dbReference>
<dbReference type="FunFam" id="2.40.50.140:FF:000090">
    <property type="entry name" value="Replication protein A subunit"/>
    <property type="match status" value="1"/>
</dbReference>
<dbReference type="FunFam" id="2.40.50.140:FF:000117">
    <property type="entry name" value="Replication protein A subunit"/>
    <property type="match status" value="1"/>
</dbReference>
<dbReference type="Gene3D" id="2.40.50.140">
    <property type="entry name" value="Nucleic acid-binding proteins"/>
    <property type="match status" value="4"/>
</dbReference>
<dbReference type="InterPro" id="IPR047192">
    <property type="entry name" value="Euk_RPA1_DBD_C"/>
</dbReference>
<dbReference type="InterPro" id="IPR012340">
    <property type="entry name" value="NA-bd_OB-fold"/>
</dbReference>
<dbReference type="InterPro" id="IPR004365">
    <property type="entry name" value="NA-bd_OB_tRNA"/>
</dbReference>
<dbReference type="InterPro" id="IPR013955">
    <property type="entry name" value="Rep_factor-A_C"/>
</dbReference>
<dbReference type="InterPro" id="IPR007199">
    <property type="entry name" value="Rep_factor-A_N"/>
</dbReference>
<dbReference type="InterPro" id="IPR031657">
    <property type="entry name" value="REPA_OB_2"/>
</dbReference>
<dbReference type="InterPro" id="IPR004591">
    <property type="entry name" value="Rfa1"/>
</dbReference>
<dbReference type="NCBIfam" id="TIGR00617">
    <property type="entry name" value="rpa1"/>
    <property type="match status" value="1"/>
</dbReference>
<dbReference type="PANTHER" id="PTHR23273">
    <property type="entry name" value="REPLICATION FACTOR A 1, RFA1"/>
    <property type="match status" value="1"/>
</dbReference>
<dbReference type="PANTHER" id="PTHR23273:SF47">
    <property type="entry name" value="REPLICATION PROTEIN A 70 KDA DNA-BINDING SUBUNIT A"/>
    <property type="match status" value="1"/>
</dbReference>
<dbReference type="Pfam" id="PF04057">
    <property type="entry name" value="Rep-A_N"/>
    <property type="match status" value="1"/>
</dbReference>
<dbReference type="Pfam" id="PF08646">
    <property type="entry name" value="Rep_fac-A_C"/>
    <property type="match status" value="1"/>
</dbReference>
<dbReference type="Pfam" id="PF16900">
    <property type="entry name" value="REPA_OB_2"/>
    <property type="match status" value="1"/>
</dbReference>
<dbReference type="Pfam" id="PF01336">
    <property type="entry name" value="tRNA_anti-codon"/>
    <property type="match status" value="1"/>
</dbReference>
<dbReference type="SUPFAM" id="SSF50249">
    <property type="entry name" value="Nucleic acid-binding proteins"/>
    <property type="match status" value="4"/>
</dbReference>
<gene>
    <name type="primary">RPA1A</name>
    <name type="synonym">RPA70A</name>
    <name type="ordered locus">At2g06510</name>
    <name type="ORF">T12H3.6</name>
</gene>
<feature type="chain" id="PRO_0000422615" description="Replication protein A 70 kDa DNA-binding subunit A">
    <location>
        <begin position="1"/>
        <end position="640"/>
    </location>
</feature>
<feature type="DNA-binding region" description="OB">
    <location>
        <begin position="211"/>
        <end position="293"/>
    </location>
</feature>
<feature type="zinc finger region" description="C4-type" evidence="2">
    <location>
        <begin position="503"/>
        <end position="529"/>
    </location>
</feature>
<sequence length="640" mass="72243">MPVSLTPNAITAIHDGDVNLKPLLQVLEIKMIGRSQERSQERYRFLISDGVSAQHAMVAVQLNDRVKSGQFEKGSIVQLIDYICSDVKGRKLIVVLNMETIVQQSETIGNPTIFGETDTEAQKTFSGTGNIPPPNRVVFNEPMVQHSVNRAPPRGVNIQNQANNTPSFRPSVQPSYQPPASYRNHGPIMKNEAPARVIPIAALNPYQGRWAIKARVTAKGDIRRYNNAKGDGKVFSFDLLDYDGGEIRVTCFNALVDRFYDVTEVGKVYLISKGSLKPAQKNFNHLKNEWEIFLESTSTVELCPDEDGSIPKQQFSFRPISDIENAENNTILDVIGVVTSVNPSVPILRKNGMETHRRILNLKDESGKAVEVTLWGEFCNRDGRQLEEMVDSAFHPVLAIKAGKVSDFSGKSVGTISSTQLFINPDFPEAHKLRTWFDYGGKDTASFSISRDTMPGGVSRNEIRKNVSQIKEEGLGRSDKPDWITVKATISFIKTDSFCYTACPLMIGDKQCNKKVTRSGTNRWLCDRCNQESDECDYRYLLQVQIQDHTGLTWITAFQETGEEIMGCPAKKLYAMKYELEKEEEFAEIVRDRLFHQYMLKLKIKEESYGDEQRVKMTVVKVDKVNYTSESKYMLDLLVR</sequence>
<protein>
    <recommendedName>
        <fullName>Replication protein A 70 kDa DNA-binding subunit A</fullName>
        <shortName>AtRPA70A</shortName>
    </recommendedName>
    <alternativeName>
        <fullName>AtRPA1-3</fullName>
    </alternativeName>
    <alternativeName>
        <fullName>Replication factor A protein 1A</fullName>
    </alternativeName>
    <alternativeName>
        <fullName>Replication protein A 1A</fullName>
        <shortName>AtRPA1A</shortName>
    </alternativeName>
</protein>
<comment type="function">
    <text evidence="4 5">Component of the replication protein A complex (RPA) required for DNA recombination, repair and replication. The activity of RPA is mediated by single-stranded DNA binding and protein interactions. Plays an essential role at later stages of meiotic recombination events required for the formation of class I crossovers. Is essential for normal progression through meiosis in pollen mother cells. Is involved in repair of double-strand DNA breaks (DSBs) induced by genotoxic stresses, but does not seem to be required for the repair of meiotic DSBs.</text>
</comment>
<comment type="subunit">
    <text evidence="1 5">Heterotrimer of RPA1, RPA2 and RPA3 (canonical replication protein A complex) (By similarity). Interacts with RPA2A.</text>
</comment>
<comment type="subcellular location">
    <subcellularLocation>
        <location evidence="4">Nucleus</location>
    </subcellularLocation>
    <text>Associated with meiotic chromosomes from leptotene through to early pachytene.</text>
</comment>
<comment type="alternative products">
    <event type="alternative splicing"/>
    <isoform>
        <id>Q9SKI4-1</id>
        <name>1</name>
        <sequence type="displayed"/>
    </isoform>
    <text>A number of isoforms are produced. According to EST sequences.</text>
</comment>
<comment type="tissue specificity">
    <text evidence="5">Expressed in roots, leaves, stalks and flower buds.</text>
</comment>
<comment type="induction">
    <text evidence="5">By the genotoxic agents methyl methanesulfonate (MMS) and bleomycin.</text>
</comment>
<comment type="disruption phenotype">
    <text evidence="3 4">There are differing accounts of the mutant phenotypes. According to an early study with a limited number of progeny from different sources (PubMed:15978034), it is embryonic lethal when homozygous. However, a more recent study describes homozygous lines that show normal vegetative growth, but reduced fertility and meiotic defects (PubMed:19153602).</text>
</comment>
<comment type="similarity">
    <text evidence="6">Belongs to the replication factor A protein 1 family.</text>
</comment>